<evidence type="ECO:0000255" key="1">
    <source>
        <dbReference type="HAMAP-Rule" id="MF_00505"/>
    </source>
</evidence>
<reference key="1">
    <citation type="journal article" date="2006" name="Proc. Natl. Acad. Sci. U.S.A.">
        <title>The complete genome sequence of a chronic atrophic gastritis Helicobacter pylori strain: evolution during disease progression.</title>
        <authorList>
            <person name="Oh J.D."/>
            <person name="Kling-Baeckhed H."/>
            <person name="Giannakis M."/>
            <person name="Xu J."/>
            <person name="Fulton R.S."/>
            <person name="Fulton L.A."/>
            <person name="Cordum H.S."/>
            <person name="Wang C."/>
            <person name="Elliott G."/>
            <person name="Edwards J."/>
            <person name="Mardis E.R."/>
            <person name="Engstrand L.G."/>
            <person name="Gordon J.I."/>
        </authorList>
    </citation>
    <scope>NUCLEOTIDE SEQUENCE [LARGE SCALE GENOMIC DNA]</scope>
    <source>
        <strain>HPAG1</strain>
    </source>
</reference>
<sequence length="621" mass="71333">MSNQEYTFQTEINQLLDLMIHSLYSNKEIFLRELISNASDALDKLNYLMLTDEKLKGLNITPSIHLSFDSQKKTLTIKDNGIGMDKNDLIEHLGTIAKSGTKSFLSALSGDKKKDSALIGQFGVGFYSAFMVASKIVVQTKKVTNHQAYAWVSDGKGKFEISECVKEEQGTEITLFLKEEDSHFASRWEIDGIVKKYSEHIPFPIFLTYTDTKFEGEGDHKKEVKEEKCDQINQASALWKMNKSELKDKDYKDFYQSFAHDNSEPLSYIHNKVEGSLEYTTLFYIPSKAPFDMFRVDYKSGVKLYVKRVFITDDDKELLPSYLRFVKGVIDSEDLPLNVSREILQQNKILANIRSASVKKILSEIERLSKDEKNYHKFYEPFGKVLKEGLYGDFENKEKLLELLRFYSKDKEKLISLKEYRENLKENQKSIYYLLGENLDLLKASPLLEKYAQKGYDVLLLSDEIDAFVMPGVNEYDKTPFRDASHSESLKELGLEEINDEVKDQFKDLMKAFEENLKDEIKGVELSSHLTSAVALIGDEQNAMMANFMRQMGQSVPESKKTLELNPNHAILQKLLKCEDKEQLSAFIWLLYDGAKLLEKGALKDAKSFNERLNSVLLKAL</sequence>
<proteinExistence type="inferred from homology"/>
<protein>
    <recommendedName>
        <fullName evidence="1">Chaperone protein HtpG</fullName>
    </recommendedName>
    <alternativeName>
        <fullName evidence="1">Heat shock protein HtpG</fullName>
    </alternativeName>
    <alternativeName>
        <fullName evidence="1">High temperature protein G</fullName>
    </alternativeName>
</protein>
<accession>Q1CUU4</accession>
<name>HTPG_HELPH</name>
<comment type="function">
    <text evidence="1">Molecular chaperone. Has ATPase activity.</text>
</comment>
<comment type="subunit">
    <text evidence="1">Homodimer.</text>
</comment>
<comment type="subcellular location">
    <subcellularLocation>
        <location evidence="1">Cytoplasm</location>
    </subcellularLocation>
</comment>
<comment type="similarity">
    <text evidence="1">Belongs to the heat shock protein 90 family.</text>
</comment>
<gene>
    <name evidence="1" type="primary">htpG</name>
    <name type="ordered locus">HPAG1_0211</name>
</gene>
<dbReference type="EMBL" id="CP000241">
    <property type="protein sequence ID" value="ABF84278.1"/>
    <property type="molecule type" value="Genomic_DNA"/>
</dbReference>
<dbReference type="RefSeq" id="WP_000070524.1">
    <property type="nucleotide sequence ID" value="NC_008086.1"/>
</dbReference>
<dbReference type="SMR" id="Q1CUU4"/>
<dbReference type="KEGG" id="hpa:HPAG1_0211"/>
<dbReference type="HOGENOM" id="CLU_006684_3_0_7"/>
<dbReference type="GO" id="GO:0005737">
    <property type="term" value="C:cytoplasm"/>
    <property type="evidence" value="ECO:0007669"/>
    <property type="project" value="UniProtKB-SubCell"/>
</dbReference>
<dbReference type="GO" id="GO:0005524">
    <property type="term" value="F:ATP binding"/>
    <property type="evidence" value="ECO:0007669"/>
    <property type="project" value="UniProtKB-UniRule"/>
</dbReference>
<dbReference type="GO" id="GO:0016887">
    <property type="term" value="F:ATP hydrolysis activity"/>
    <property type="evidence" value="ECO:0007669"/>
    <property type="project" value="InterPro"/>
</dbReference>
<dbReference type="GO" id="GO:0140662">
    <property type="term" value="F:ATP-dependent protein folding chaperone"/>
    <property type="evidence" value="ECO:0007669"/>
    <property type="project" value="InterPro"/>
</dbReference>
<dbReference type="GO" id="GO:0051082">
    <property type="term" value="F:unfolded protein binding"/>
    <property type="evidence" value="ECO:0007669"/>
    <property type="project" value="UniProtKB-UniRule"/>
</dbReference>
<dbReference type="CDD" id="cd16927">
    <property type="entry name" value="HATPase_Hsp90-like"/>
    <property type="match status" value="1"/>
</dbReference>
<dbReference type="FunFam" id="3.30.230.80:FF:000002">
    <property type="entry name" value="Molecular chaperone HtpG"/>
    <property type="match status" value="1"/>
</dbReference>
<dbReference type="FunFam" id="3.30.565.10:FF:000009">
    <property type="entry name" value="Molecular chaperone HtpG"/>
    <property type="match status" value="1"/>
</dbReference>
<dbReference type="Gene3D" id="3.30.230.80">
    <property type="match status" value="1"/>
</dbReference>
<dbReference type="Gene3D" id="3.40.50.11260">
    <property type="match status" value="1"/>
</dbReference>
<dbReference type="Gene3D" id="1.20.120.790">
    <property type="entry name" value="Heat shock protein 90, C-terminal domain"/>
    <property type="match status" value="1"/>
</dbReference>
<dbReference type="Gene3D" id="3.30.565.10">
    <property type="entry name" value="Histidine kinase-like ATPase, C-terminal domain"/>
    <property type="match status" value="1"/>
</dbReference>
<dbReference type="HAMAP" id="MF_00505">
    <property type="entry name" value="HSP90"/>
    <property type="match status" value="1"/>
</dbReference>
<dbReference type="InterPro" id="IPR036890">
    <property type="entry name" value="HATPase_C_sf"/>
</dbReference>
<dbReference type="InterPro" id="IPR019805">
    <property type="entry name" value="Heat_shock_protein_90_CS"/>
</dbReference>
<dbReference type="InterPro" id="IPR037196">
    <property type="entry name" value="HSP90_C"/>
</dbReference>
<dbReference type="InterPro" id="IPR001404">
    <property type="entry name" value="Hsp90_fam"/>
</dbReference>
<dbReference type="InterPro" id="IPR020575">
    <property type="entry name" value="Hsp90_N"/>
</dbReference>
<dbReference type="InterPro" id="IPR020568">
    <property type="entry name" value="Ribosomal_Su5_D2-typ_SF"/>
</dbReference>
<dbReference type="NCBIfam" id="NF003555">
    <property type="entry name" value="PRK05218.1"/>
    <property type="match status" value="1"/>
</dbReference>
<dbReference type="PANTHER" id="PTHR11528">
    <property type="entry name" value="HEAT SHOCK PROTEIN 90 FAMILY MEMBER"/>
    <property type="match status" value="1"/>
</dbReference>
<dbReference type="Pfam" id="PF13589">
    <property type="entry name" value="HATPase_c_3"/>
    <property type="match status" value="1"/>
</dbReference>
<dbReference type="Pfam" id="PF00183">
    <property type="entry name" value="HSP90"/>
    <property type="match status" value="1"/>
</dbReference>
<dbReference type="PIRSF" id="PIRSF002583">
    <property type="entry name" value="Hsp90"/>
    <property type="match status" value="1"/>
</dbReference>
<dbReference type="PRINTS" id="PR00775">
    <property type="entry name" value="HEATSHOCK90"/>
</dbReference>
<dbReference type="SMART" id="SM00387">
    <property type="entry name" value="HATPase_c"/>
    <property type="match status" value="1"/>
</dbReference>
<dbReference type="SUPFAM" id="SSF55874">
    <property type="entry name" value="ATPase domain of HSP90 chaperone/DNA topoisomerase II/histidine kinase"/>
    <property type="match status" value="1"/>
</dbReference>
<dbReference type="SUPFAM" id="SSF110942">
    <property type="entry name" value="HSP90 C-terminal domain"/>
    <property type="match status" value="1"/>
</dbReference>
<dbReference type="SUPFAM" id="SSF54211">
    <property type="entry name" value="Ribosomal protein S5 domain 2-like"/>
    <property type="match status" value="1"/>
</dbReference>
<dbReference type="PROSITE" id="PS00298">
    <property type="entry name" value="HSP90"/>
    <property type="match status" value="1"/>
</dbReference>
<feature type="chain" id="PRO_0000258513" description="Chaperone protein HtpG">
    <location>
        <begin position="1"/>
        <end position="621"/>
    </location>
</feature>
<feature type="region of interest" description="A; substrate-binding" evidence="1">
    <location>
        <begin position="1"/>
        <end position="341"/>
    </location>
</feature>
<feature type="region of interest" description="B" evidence="1">
    <location>
        <begin position="342"/>
        <end position="547"/>
    </location>
</feature>
<feature type="region of interest" description="C" evidence="1">
    <location>
        <begin position="548"/>
        <end position="621"/>
    </location>
</feature>
<organism>
    <name type="scientific">Helicobacter pylori (strain HPAG1)</name>
    <dbReference type="NCBI Taxonomy" id="357544"/>
    <lineage>
        <taxon>Bacteria</taxon>
        <taxon>Pseudomonadati</taxon>
        <taxon>Campylobacterota</taxon>
        <taxon>Epsilonproteobacteria</taxon>
        <taxon>Campylobacterales</taxon>
        <taxon>Helicobacteraceae</taxon>
        <taxon>Helicobacter</taxon>
    </lineage>
</organism>
<keyword id="KW-0067">ATP-binding</keyword>
<keyword id="KW-0143">Chaperone</keyword>
<keyword id="KW-0963">Cytoplasm</keyword>
<keyword id="KW-0547">Nucleotide-binding</keyword>
<keyword id="KW-0346">Stress response</keyword>